<organism>
    <name type="scientific">Burkholderia ambifaria (strain ATCC BAA-244 / DSM 16087 / CCUG 44356 / LMG 19182 / AMMD)</name>
    <name type="common">Burkholderia cepacia (strain AMMD)</name>
    <dbReference type="NCBI Taxonomy" id="339670"/>
    <lineage>
        <taxon>Bacteria</taxon>
        <taxon>Pseudomonadati</taxon>
        <taxon>Pseudomonadota</taxon>
        <taxon>Betaproteobacteria</taxon>
        <taxon>Burkholderiales</taxon>
        <taxon>Burkholderiaceae</taxon>
        <taxon>Burkholderia</taxon>
        <taxon>Burkholderia cepacia complex</taxon>
    </lineage>
</organism>
<protein>
    <recommendedName>
        <fullName evidence="1">Small ribosomal subunit protein uS14</fullName>
    </recommendedName>
    <alternativeName>
        <fullName evidence="2">30S ribosomal protein S14</fullName>
    </alternativeName>
</protein>
<sequence length="101" mass="11706">MAKLALIEREKKRARLVAKFAAKREALKAIVEDQSKSEEERYEARLELQQLPRNANPTRQRNRCAITGRPRGTFRKFGLARNKIREIAFRGEIPGLTKASW</sequence>
<keyword id="KW-0687">Ribonucleoprotein</keyword>
<keyword id="KW-0689">Ribosomal protein</keyword>
<keyword id="KW-0694">RNA-binding</keyword>
<keyword id="KW-0699">rRNA-binding</keyword>
<comment type="function">
    <text evidence="1">Binds 16S rRNA, required for the assembly of 30S particles and may also be responsible for determining the conformation of the 16S rRNA at the A site.</text>
</comment>
<comment type="subunit">
    <text evidence="1">Part of the 30S ribosomal subunit. Contacts proteins S3 and S10.</text>
</comment>
<comment type="similarity">
    <text evidence="1">Belongs to the universal ribosomal protein uS14 family.</text>
</comment>
<feature type="chain" id="PRO_1000128331" description="Small ribosomal subunit protein uS14">
    <location>
        <begin position="1"/>
        <end position="101"/>
    </location>
</feature>
<accession>Q0BJ33</accession>
<proteinExistence type="inferred from homology"/>
<evidence type="ECO:0000255" key="1">
    <source>
        <dbReference type="HAMAP-Rule" id="MF_00537"/>
    </source>
</evidence>
<evidence type="ECO:0000305" key="2"/>
<reference key="1">
    <citation type="submission" date="2006-08" db="EMBL/GenBank/DDBJ databases">
        <title>Complete sequence of chromosome 1 of Burkholderia cepacia AMMD.</title>
        <authorList>
            <person name="Copeland A."/>
            <person name="Lucas S."/>
            <person name="Lapidus A."/>
            <person name="Barry K."/>
            <person name="Detter J.C."/>
            <person name="Glavina del Rio T."/>
            <person name="Hammon N."/>
            <person name="Israni S."/>
            <person name="Pitluck S."/>
            <person name="Bruce D."/>
            <person name="Chain P."/>
            <person name="Malfatti S."/>
            <person name="Shin M."/>
            <person name="Vergez L."/>
            <person name="Schmutz J."/>
            <person name="Larimer F."/>
            <person name="Land M."/>
            <person name="Hauser L."/>
            <person name="Kyrpides N."/>
            <person name="Kim E."/>
            <person name="Parke J."/>
            <person name="Coenye T."/>
            <person name="Konstantinidis K."/>
            <person name="Ramette A."/>
            <person name="Tiedje J."/>
            <person name="Richardson P."/>
        </authorList>
    </citation>
    <scope>NUCLEOTIDE SEQUENCE [LARGE SCALE GENOMIC DNA]</scope>
    <source>
        <strain>ATCC BAA-244 / DSM 16087 / CCUG 44356 / LMG 19182 / AMMD</strain>
    </source>
</reference>
<name>RS14_BURCM</name>
<gene>
    <name evidence="1" type="primary">rpsN</name>
    <name type="ordered locus">Bamb_0280</name>
</gene>
<dbReference type="EMBL" id="CP000440">
    <property type="protein sequence ID" value="ABI85840.1"/>
    <property type="molecule type" value="Genomic_DNA"/>
</dbReference>
<dbReference type="RefSeq" id="WP_006482884.1">
    <property type="nucleotide sequence ID" value="NZ_CP009798.1"/>
</dbReference>
<dbReference type="SMR" id="Q0BJ33"/>
<dbReference type="GeneID" id="98107147"/>
<dbReference type="KEGG" id="bam:Bamb_0280"/>
<dbReference type="PATRIC" id="fig|339670.21.peg.1340"/>
<dbReference type="eggNOG" id="COG0199">
    <property type="taxonomic scope" value="Bacteria"/>
</dbReference>
<dbReference type="Proteomes" id="UP000000662">
    <property type="component" value="Chromosome 1"/>
</dbReference>
<dbReference type="GO" id="GO:0005737">
    <property type="term" value="C:cytoplasm"/>
    <property type="evidence" value="ECO:0007669"/>
    <property type="project" value="UniProtKB-ARBA"/>
</dbReference>
<dbReference type="GO" id="GO:0015935">
    <property type="term" value="C:small ribosomal subunit"/>
    <property type="evidence" value="ECO:0007669"/>
    <property type="project" value="TreeGrafter"/>
</dbReference>
<dbReference type="GO" id="GO:0019843">
    <property type="term" value="F:rRNA binding"/>
    <property type="evidence" value="ECO:0007669"/>
    <property type="project" value="UniProtKB-UniRule"/>
</dbReference>
<dbReference type="GO" id="GO:0003735">
    <property type="term" value="F:structural constituent of ribosome"/>
    <property type="evidence" value="ECO:0007669"/>
    <property type="project" value="InterPro"/>
</dbReference>
<dbReference type="GO" id="GO:0006412">
    <property type="term" value="P:translation"/>
    <property type="evidence" value="ECO:0007669"/>
    <property type="project" value="UniProtKB-UniRule"/>
</dbReference>
<dbReference type="FunFam" id="1.10.287.1480:FF:000001">
    <property type="entry name" value="30S ribosomal protein S14"/>
    <property type="match status" value="1"/>
</dbReference>
<dbReference type="Gene3D" id="1.10.287.1480">
    <property type="match status" value="1"/>
</dbReference>
<dbReference type="HAMAP" id="MF_00537">
    <property type="entry name" value="Ribosomal_uS14_1"/>
    <property type="match status" value="1"/>
</dbReference>
<dbReference type="InterPro" id="IPR001209">
    <property type="entry name" value="Ribosomal_uS14"/>
</dbReference>
<dbReference type="InterPro" id="IPR023036">
    <property type="entry name" value="Ribosomal_uS14_bac/plastid"/>
</dbReference>
<dbReference type="NCBIfam" id="NF006477">
    <property type="entry name" value="PRK08881.1"/>
    <property type="match status" value="1"/>
</dbReference>
<dbReference type="PANTHER" id="PTHR19836">
    <property type="entry name" value="30S RIBOSOMAL PROTEIN S14"/>
    <property type="match status" value="1"/>
</dbReference>
<dbReference type="PANTHER" id="PTHR19836:SF19">
    <property type="entry name" value="SMALL RIBOSOMAL SUBUNIT PROTEIN US14M"/>
    <property type="match status" value="1"/>
</dbReference>
<dbReference type="Pfam" id="PF00253">
    <property type="entry name" value="Ribosomal_S14"/>
    <property type="match status" value="1"/>
</dbReference>
<dbReference type="SUPFAM" id="SSF57716">
    <property type="entry name" value="Glucocorticoid receptor-like (DNA-binding domain)"/>
    <property type="match status" value="1"/>
</dbReference>